<evidence type="ECO:0000255" key="1">
    <source>
        <dbReference type="HAMAP-Rule" id="MF_00034"/>
    </source>
</evidence>
<feature type="chain" id="PRO_1000002774" description="Crossover junction endodeoxyribonuclease RuvC">
    <location>
        <begin position="1"/>
        <end position="175"/>
    </location>
</feature>
<feature type="active site" evidence="1">
    <location>
        <position position="8"/>
    </location>
</feature>
<feature type="active site" evidence="1">
    <location>
        <position position="67"/>
    </location>
</feature>
<feature type="active site" evidence="1">
    <location>
        <position position="139"/>
    </location>
</feature>
<feature type="binding site" evidence="1">
    <location>
        <position position="8"/>
    </location>
    <ligand>
        <name>Mg(2+)</name>
        <dbReference type="ChEBI" id="CHEBI:18420"/>
        <label>1</label>
    </ligand>
</feature>
<feature type="binding site" evidence="1">
    <location>
        <position position="67"/>
    </location>
    <ligand>
        <name>Mg(2+)</name>
        <dbReference type="ChEBI" id="CHEBI:18420"/>
        <label>2</label>
    </ligand>
</feature>
<feature type="binding site" evidence="1">
    <location>
        <position position="139"/>
    </location>
    <ligand>
        <name>Mg(2+)</name>
        <dbReference type="ChEBI" id="CHEBI:18420"/>
        <label>1</label>
    </ligand>
</feature>
<reference key="1">
    <citation type="journal article" date="2011" name="Appl. Environ. Microbiol.">
        <title>Genomic potential of Marinobacter aquaeolei, a biogeochemical 'opportunitroph'.</title>
        <authorList>
            <person name="Singer E."/>
            <person name="Webb E.A."/>
            <person name="Nelson W.C."/>
            <person name="Heidelberg J.F."/>
            <person name="Ivanova N."/>
            <person name="Pati A."/>
            <person name="Edwards K.J."/>
        </authorList>
    </citation>
    <scope>NUCLEOTIDE SEQUENCE [LARGE SCALE GENOMIC DNA]</scope>
    <source>
        <strain>ATCC 700491 / DSM 11845 / VT8</strain>
    </source>
</reference>
<protein>
    <recommendedName>
        <fullName evidence="1">Crossover junction endodeoxyribonuclease RuvC</fullName>
        <ecNumber evidence="1">3.1.21.10</ecNumber>
    </recommendedName>
    <alternativeName>
        <fullName evidence="1">Holliday junction nuclease RuvC</fullName>
    </alternativeName>
    <alternativeName>
        <fullName evidence="1">Holliday junction resolvase RuvC</fullName>
    </alternativeName>
</protein>
<dbReference type="EC" id="3.1.21.10" evidence="1"/>
<dbReference type="EMBL" id="CP000514">
    <property type="protein sequence ID" value="ABM18790.1"/>
    <property type="molecule type" value="Genomic_DNA"/>
</dbReference>
<dbReference type="RefSeq" id="WP_011785189.1">
    <property type="nucleotide sequence ID" value="NC_008740.1"/>
</dbReference>
<dbReference type="SMR" id="A1U1C1"/>
<dbReference type="STRING" id="351348.Maqu_1706"/>
<dbReference type="GeneID" id="31821053"/>
<dbReference type="KEGG" id="maq:Maqu_1706"/>
<dbReference type="eggNOG" id="COG0817">
    <property type="taxonomic scope" value="Bacteria"/>
</dbReference>
<dbReference type="HOGENOM" id="CLU_091257_2_1_6"/>
<dbReference type="OrthoDB" id="9805499at2"/>
<dbReference type="Proteomes" id="UP000000998">
    <property type="component" value="Chromosome"/>
</dbReference>
<dbReference type="GO" id="GO:0005737">
    <property type="term" value="C:cytoplasm"/>
    <property type="evidence" value="ECO:0007669"/>
    <property type="project" value="UniProtKB-SubCell"/>
</dbReference>
<dbReference type="GO" id="GO:0048476">
    <property type="term" value="C:Holliday junction resolvase complex"/>
    <property type="evidence" value="ECO:0007669"/>
    <property type="project" value="UniProtKB-UniRule"/>
</dbReference>
<dbReference type="GO" id="GO:0008821">
    <property type="term" value="F:crossover junction DNA endonuclease activity"/>
    <property type="evidence" value="ECO:0007669"/>
    <property type="project" value="UniProtKB-UniRule"/>
</dbReference>
<dbReference type="GO" id="GO:0003677">
    <property type="term" value="F:DNA binding"/>
    <property type="evidence" value="ECO:0007669"/>
    <property type="project" value="UniProtKB-KW"/>
</dbReference>
<dbReference type="GO" id="GO:0000287">
    <property type="term" value="F:magnesium ion binding"/>
    <property type="evidence" value="ECO:0007669"/>
    <property type="project" value="UniProtKB-UniRule"/>
</dbReference>
<dbReference type="GO" id="GO:0006310">
    <property type="term" value="P:DNA recombination"/>
    <property type="evidence" value="ECO:0007669"/>
    <property type="project" value="UniProtKB-UniRule"/>
</dbReference>
<dbReference type="GO" id="GO:0006281">
    <property type="term" value="P:DNA repair"/>
    <property type="evidence" value="ECO:0007669"/>
    <property type="project" value="UniProtKB-UniRule"/>
</dbReference>
<dbReference type="CDD" id="cd16962">
    <property type="entry name" value="RuvC"/>
    <property type="match status" value="1"/>
</dbReference>
<dbReference type="FunFam" id="3.30.420.10:FF:000002">
    <property type="entry name" value="Crossover junction endodeoxyribonuclease RuvC"/>
    <property type="match status" value="1"/>
</dbReference>
<dbReference type="Gene3D" id="3.30.420.10">
    <property type="entry name" value="Ribonuclease H-like superfamily/Ribonuclease H"/>
    <property type="match status" value="1"/>
</dbReference>
<dbReference type="HAMAP" id="MF_00034">
    <property type="entry name" value="RuvC"/>
    <property type="match status" value="1"/>
</dbReference>
<dbReference type="InterPro" id="IPR012337">
    <property type="entry name" value="RNaseH-like_sf"/>
</dbReference>
<dbReference type="InterPro" id="IPR036397">
    <property type="entry name" value="RNaseH_sf"/>
</dbReference>
<dbReference type="InterPro" id="IPR020563">
    <property type="entry name" value="X-over_junc_endoDNase_Mg_BS"/>
</dbReference>
<dbReference type="InterPro" id="IPR002176">
    <property type="entry name" value="X-over_junc_endoDNase_RuvC"/>
</dbReference>
<dbReference type="NCBIfam" id="TIGR00228">
    <property type="entry name" value="ruvC"/>
    <property type="match status" value="1"/>
</dbReference>
<dbReference type="PANTHER" id="PTHR30194">
    <property type="entry name" value="CROSSOVER JUNCTION ENDODEOXYRIBONUCLEASE RUVC"/>
    <property type="match status" value="1"/>
</dbReference>
<dbReference type="PANTHER" id="PTHR30194:SF3">
    <property type="entry name" value="CROSSOVER JUNCTION ENDODEOXYRIBONUCLEASE RUVC"/>
    <property type="match status" value="1"/>
</dbReference>
<dbReference type="Pfam" id="PF02075">
    <property type="entry name" value="RuvC"/>
    <property type="match status" value="1"/>
</dbReference>
<dbReference type="PRINTS" id="PR00696">
    <property type="entry name" value="RSOLVASERUVC"/>
</dbReference>
<dbReference type="SUPFAM" id="SSF53098">
    <property type="entry name" value="Ribonuclease H-like"/>
    <property type="match status" value="1"/>
</dbReference>
<dbReference type="PROSITE" id="PS01321">
    <property type="entry name" value="RUVC"/>
    <property type="match status" value="1"/>
</dbReference>
<keyword id="KW-0963">Cytoplasm</keyword>
<keyword id="KW-0227">DNA damage</keyword>
<keyword id="KW-0233">DNA recombination</keyword>
<keyword id="KW-0234">DNA repair</keyword>
<keyword id="KW-0238">DNA-binding</keyword>
<keyword id="KW-0255">Endonuclease</keyword>
<keyword id="KW-0378">Hydrolase</keyword>
<keyword id="KW-0460">Magnesium</keyword>
<keyword id="KW-0479">Metal-binding</keyword>
<keyword id="KW-0540">Nuclease</keyword>
<comment type="function">
    <text evidence="1">The RuvA-RuvB-RuvC complex processes Holliday junction (HJ) DNA during genetic recombination and DNA repair. Endonuclease that resolves HJ intermediates. Cleaves cruciform DNA by making single-stranded nicks across the HJ at symmetrical positions within the homologous arms, yielding a 5'-phosphate and a 3'-hydroxyl group; requires a central core of homology in the junction. The consensus cleavage sequence is 5'-(A/T)TT(C/G)-3'. Cleavage occurs on the 3'-side of the TT dinucleotide at the point of strand exchange. HJ branch migration catalyzed by RuvA-RuvB allows RuvC to scan DNA until it finds its consensus sequence, where it cleaves and resolves the cruciform DNA.</text>
</comment>
<comment type="catalytic activity">
    <reaction evidence="1">
        <text>Endonucleolytic cleavage at a junction such as a reciprocal single-stranded crossover between two homologous DNA duplexes (Holliday junction).</text>
        <dbReference type="EC" id="3.1.21.10"/>
    </reaction>
</comment>
<comment type="cofactor">
    <cofactor evidence="1">
        <name>Mg(2+)</name>
        <dbReference type="ChEBI" id="CHEBI:18420"/>
    </cofactor>
    <text evidence="1">Binds 2 Mg(2+) ion per subunit.</text>
</comment>
<comment type="subunit">
    <text evidence="1">Homodimer which binds Holliday junction (HJ) DNA. The HJ becomes 2-fold symmetrical on binding to RuvC with unstacked arms; it has a different conformation from HJ DNA in complex with RuvA. In the full resolvosome a probable DNA-RuvA(4)-RuvB(12)-RuvC(2) complex forms which resolves the HJ.</text>
</comment>
<comment type="subcellular location">
    <subcellularLocation>
        <location evidence="1">Cytoplasm</location>
    </subcellularLocation>
</comment>
<comment type="similarity">
    <text evidence="1">Belongs to the RuvC family.</text>
</comment>
<organism>
    <name type="scientific">Marinobacter nauticus (strain ATCC 700491 / DSM 11845 / VT8)</name>
    <name type="common">Marinobacter aquaeolei</name>
    <dbReference type="NCBI Taxonomy" id="351348"/>
    <lineage>
        <taxon>Bacteria</taxon>
        <taxon>Pseudomonadati</taxon>
        <taxon>Pseudomonadota</taxon>
        <taxon>Gammaproteobacteria</taxon>
        <taxon>Pseudomonadales</taxon>
        <taxon>Marinobacteraceae</taxon>
        <taxon>Marinobacter</taxon>
    </lineage>
</organism>
<accession>A1U1C1</accession>
<gene>
    <name evidence="1" type="primary">ruvC</name>
    <name type="ordered locus">Maqu_1706</name>
</gene>
<proteinExistence type="inferred from homology"/>
<sequence length="175" mass="18716">MAIILGVDPGSRITGYGLIRSEGRLLEYLDSGCIRVGEKPMAERLQTIFHSLAVLIGEYRPEEFAIEQVFMARNPDSALKLGQARGAAIVSAANSGLAVHEYSARQVKQAVVGTGGADKSQVQHMVQALLGLSRKPQADAADALAIALCHAHMNQSVLRMARTGGKVRSGRVRQP</sequence>
<name>RUVC_MARN8</name>